<reference key="1">
    <citation type="journal article" date="2005" name="Genome Res.">
        <title>Sequence, annotation, and analysis of synteny between rice chromosome 3 and diverged grass species.</title>
        <authorList>
            <consortium name="The rice chromosome 3 sequencing consortium"/>
            <person name="Buell C.R."/>
            <person name="Yuan Q."/>
            <person name="Ouyang S."/>
            <person name="Liu J."/>
            <person name="Zhu W."/>
            <person name="Wang A."/>
            <person name="Maiti R."/>
            <person name="Haas B."/>
            <person name="Wortman J."/>
            <person name="Pertea M."/>
            <person name="Jones K.M."/>
            <person name="Kim M."/>
            <person name="Overton L."/>
            <person name="Tsitrin T."/>
            <person name="Fadrosh D."/>
            <person name="Bera J."/>
            <person name="Weaver B."/>
            <person name="Jin S."/>
            <person name="Johri S."/>
            <person name="Reardon M."/>
            <person name="Webb K."/>
            <person name="Hill J."/>
            <person name="Moffat K."/>
            <person name="Tallon L."/>
            <person name="Van Aken S."/>
            <person name="Lewis M."/>
            <person name="Utterback T."/>
            <person name="Feldblyum T."/>
            <person name="Zismann V."/>
            <person name="Iobst S."/>
            <person name="Hsiao J."/>
            <person name="de Vazeille A.R."/>
            <person name="Salzberg S.L."/>
            <person name="White O."/>
            <person name="Fraser C.M."/>
            <person name="Yu Y."/>
            <person name="Kim H."/>
            <person name="Rambo T."/>
            <person name="Currie J."/>
            <person name="Collura K."/>
            <person name="Kernodle-Thompson S."/>
            <person name="Wei F."/>
            <person name="Kudrna K."/>
            <person name="Ammiraju J.S.S."/>
            <person name="Luo M."/>
            <person name="Goicoechea J.L."/>
            <person name="Wing R.A."/>
            <person name="Henry D."/>
            <person name="Oates R."/>
            <person name="Palmer M."/>
            <person name="Pries G."/>
            <person name="Saski C."/>
            <person name="Simmons J."/>
            <person name="Soderlund C."/>
            <person name="Nelson W."/>
            <person name="de la Bastide M."/>
            <person name="Spiegel L."/>
            <person name="Nascimento L."/>
            <person name="Huang E."/>
            <person name="Preston R."/>
            <person name="Zutavern T."/>
            <person name="Palmer L."/>
            <person name="O'Shaughnessy A."/>
            <person name="Dike S."/>
            <person name="McCombie W.R."/>
            <person name="Minx P."/>
            <person name="Cordum H."/>
            <person name="Wilson R."/>
            <person name="Jin W."/>
            <person name="Lee H.R."/>
            <person name="Jiang J."/>
            <person name="Jackson S."/>
        </authorList>
    </citation>
    <scope>NUCLEOTIDE SEQUENCE [LARGE SCALE GENOMIC DNA]</scope>
    <source>
        <strain>cv. Nipponbare</strain>
    </source>
</reference>
<reference key="2">
    <citation type="journal article" date="2005" name="Nature">
        <title>The map-based sequence of the rice genome.</title>
        <authorList>
            <consortium name="International rice genome sequencing project (IRGSP)"/>
        </authorList>
    </citation>
    <scope>NUCLEOTIDE SEQUENCE [LARGE SCALE GENOMIC DNA]</scope>
    <source>
        <strain>cv. Nipponbare</strain>
    </source>
</reference>
<reference key="3">
    <citation type="journal article" date="2008" name="Nucleic Acids Res.">
        <title>The rice annotation project database (RAP-DB): 2008 update.</title>
        <authorList>
            <consortium name="The rice annotation project (RAP)"/>
        </authorList>
    </citation>
    <scope>GENOME REANNOTATION</scope>
    <source>
        <strain>cv. Nipponbare</strain>
    </source>
</reference>
<reference key="4">
    <citation type="journal article" date="2013" name="Rice">
        <title>Improvement of the Oryza sativa Nipponbare reference genome using next generation sequence and optical map data.</title>
        <authorList>
            <person name="Kawahara Y."/>
            <person name="de la Bastide M."/>
            <person name="Hamilton J.P."/>
            <person name="Kanamori H."/>
            <person name="McCombie W.R."/>
            <person name="Ouyang S."/>
            <person name="Schwartz D.C."/>
            <person name="Tanaka T."/>
            <person name="Wu J."/>
            <person name="Zhou S."/>
            <person name="Childs K.L."/>
            <person name="Davidson R.M."/>
            <person name="Lin H."/>
            <person name="Quesada-Ocampo L."/>
            <person name="Vaillancourt B."/>
            <person name="Sakai H."/>
            <person name="Lee S.S."/>
            <person name="Kim J."/>
            <person name="Numa H."/>
            <person name="Itoh T."/>
            <person name="Buell C.R."/>
            <person name="Matsumoto T."/>
        </authorList>
    </citation>
    <scope>GENOME REANNOTATION</scope>
    <source>
        <strain>cv. Nipponbare</strain>
    </source>
</reference>
<reference key="5">
    <citation type="journal article" date="2005" name="PLoS Biol.">
        <title>The genomes of Oryza sativa: a history of duplications.</title>
        <authorList>
            <person name="Yu J."/>
            <person name="Wang J."/>
            <person name="Lin W."/>
            <person name="Li S."/>
            <person name="Li H."/>
            <person name="Zhou J."/>
            <person name="Ni P."/>
            <person name="Dong W."/>
            <person name="Hu S."/>
            <person name="Zeng C."/>
            <person name="Zhang J."/>
            <person name="Zhang Y."/>
            <person name="Li R."/>
            <person name="Xu Z."/>
            <person name="Li S."/>
            <person name="Li X."/>
            <person name="Zheng H."/>
            <person name="Cong L."/>
            <person name="Lin L."/>
            <person name="Yin J."/>
            <person name="Geng J."/>
            <person name="Li G."/>
            <person name="Shi J."/>
            <person name="Liu J."/>
            <person name="Lv H."/>
            <person name="Li J."/>
            <person name="Wang J."/>
            <person name="Deng Y."/>
            <person name="Ran L."/>
            <person name="Shi X."/>
            <person name="Wang X."/>
            <person name="Wu Q."/>
            <person name="Li C."/>
            <person name="Ren X."/>
            <person name="Wang J."/>
            <person name="Wang X."/>
            <person name="Li D."/>
            <person name="Liu D."/>
            <person name="Zhang X."/>
            <person name="Ji Z."/>
            <person name="Zhao W."/>
            <person name="Sun Y."/>
            <person name="Zhang Z."/>
            <person name="Bao J."/>
            <person name="Han Y."/>
            <person name="Dong L."/>
            <person name="Ji J."/>
            <person name="Chen P."/>
            <person name="Wu S."/>
            <person name="Liu J."/>
            <person name="Xiao Y."/>
            <person name="Bu D."/>
            <person name="Tan J."/>
            <person name="Yang L."/>
            <person name="Ye C."/>
            <person name="Zhang J."/>
            <person name="Xu J."/>
            <person name="Zhou Y."/>
            <person name="Yu Y."/>
            <person name="Zhang B."/>
            <person name="Zhuang S."/>
            <person name="Wei H."/>
            <person name="Liu B."/>
            <person name="Lei M."/>
            <person name="Yu H."/>
            <person name="Li Y."/>
            <person name="Xu H."/>
            <person name="Wei S."/>
            <person name="He X."/>
            <person name="Fang L."/>
            <person name="Zhang Z."/>
            <person name="Zhang Y."/>
            <person name="Huang X."/>
            <person name="Su Z."/>
            <person name="Tong W."/>
            <person name="Li J."/>
            <person name="Tong Z."/>
            <person name="Li S."/>
            <person name="Ye J."/>
            <person name="Wang L."/>
            <person name="Fang L."/>
            <person name="Lei T."/>
            <person name="Chen C.-S."/>
            <person name="Chen H.-C."/>
            <person name="Xu Z."/>
            <person name="Li H."/>
            <person name="Huang H."/>
            <person name="Zhang F."/>
            <person name="Xu H."/>
            <person name="Li N."/>
            <person name="Zhao C."/>
            <person name="Li S."/>
            <person name="Dong L."/>
            <person name="Huang Y."/>
            <person name="Li L."/>
            <person name="Xi Y."/>
            <person name="Qi Q."/>
            <person name="Li W."/>
            <person name="Zhang B."/>
            <person name="Hu W."/>
            <person name="Zhang Y."/>
            <person name="Tian X."/>
            <person name="Jiao Y."/>
            <person name="Liang X."/>
            <person name="Jin J."/>
            <person name="Gao L."/>
            <person name="Zheng W."/>
            <person name="Hao B."/>
            <person name="Liu S.-M."/>
            <person name="Wang W."/>
            <person name="Yuan L."/>
            <person name="Cao M."/>
            <person name="McDermott J."/>
            <person name="Samudrala R."/>
            <person name="Wang J."/>
            <person name="Wong G.K.-S."/>
            <person name="Yang H."/>
        </authorList>
    </citation>
    <scope>NUCLEOTIDE SEQUENCE [LARGE SCALE GENOMIC DNA]</scope>
    <source>
        <strain>cv. Nipponbare</strain>
    </source>
</reference>
<reference key="6">
    <citation type="journal article" date="2003" name="Science">
        <title>Collection, mapping, and annotation of over 28,000 cDNA clones from japonica rice.</title>
        <authorList>
            <consortium name="The rice full-length cDNA consortium"/>
        </authorList>
    </citation>
    <scope>NUCLEOTIDE SEQUENCE [LARGE SCALE MRNA]</scope>
    <source>
        <strain>cv. Nipponbare</strain>
    </source>
</reference>
<reference key="7">
    <citation type="journal article" date="2009" name="Plant J.">
        <title>Arabidopsis ING and Alfin1-like protein families localize to the nucleus and bind to H3K4me3/2 via plant homeodomain fingers.</title>
        <authorList>
            <person name="Lee W.Y."/>
            <person name="Lee D."/>
            <person name="Chung W.I."/>
            <person name="Kwon C.S."/>
        </authorList>
    </citation>
    <scope>GENE FAMILY</scope>
</reference>
<comment type="function">
    <text evidence="1">Histone-binding component that specifically recognizes H3 tails trimethylated on 'Lys-4' (H3K4me3), which mark transcription start sites of virtually all active genes.</text>
</comment>
<comment type="subunit">
    <text evidence="1">Interacts with H3K4me3 and to a lesser extent with H3K4me2.</text>
</comment>
<comment type="subcellular location">
    <subcellularLocation>
        <location evidence="1">Nucleus</location>
    </subcellularLocation>
</comment>
<comment type="domain">
    <text evidence="1">The PHD-type zinc finger mediates the binding to H3K4me3.</text>
</comment>
<comment type="similarity">
    <text evidence="4">Belongs to the Alfin family.</text>
</comment>
<comment type="sequence caution" evidence="4">
    <conflict type="erroneous initiation">
        <sequence resource="EMBL-CDS" id="AAO65855"/>
    </conflict>
    <text>Truncated N-terminus.</text>
</comment>
<comment type="sequence caution" evidence="4">
    <conflict type="erroneous initiation">
        <sequence resource="EMBL-CDS" id="EEE60182"/>
    </conflict>
    <text>Truncated N-terminus.</text>
</comment>
<dbReference type="EMBL" id="AC104433">
    <property type="protein sequence ID" value="AAO65855.1"/>
    <property type="status" value="ALT_INIT"/>
    <property type="molecule type" value="Genomic_DNA"/>
</dbReference>
<dbReference type="EMBL" id="AC133007">
    <property type="protein sequence ID" value="AAO60037.1"/>
    <property type="molecule type" value="Genomic_DNA"/>
</dbReference>
<dbReference type="EMBL" id="DP000009">
    <property type="protein sequence ID" value="ABF99565.1"/>
    <property type="molecule type" value="Genomic_DNA"/>
</dbReference>
<dbReference type="EMBL" id="AP008209">
    <property type="protein sequence ID" value="BAF13621.1"/>
    <property type="molecule type" value="Genomic_DNA"/>
</dbReference>
<dbReference type="EMBL" id="AP014959">
    <property type="protein sequence ID" value="BAS87067.1"/>
    <property type="molecule type" value="Genomic_DNA"/>
</dbReference>
<dbReference type="EMBL" id="CM000140">
    <property type="protein sequence ID" value="EEE60182.1"/>
    <property type="status" value="ALT_INIT"/>
    <property type="molecule type" value="Genomic_DNA"/>
</dbReference>
<dbReference type="EMBL" id="AK103363">
    <property type="protein sequence ID" value="BAG96042.1"/>
    <property type="molecule type" value="mRNA"/>
</dbReference>
<dbReference type="RefSeq" id="XP_015629849.1">
    <property type="nucleotide sequence ID" value="XM_015774363.1"/>
</dbReference>
<dbReference type="SMR" id="Q84TV4"/>
<dbReference type="FunCoup" id="Q84TV4">
    <property type="interactions" value="1782"/>
</dbReference>
<dbReference type="STRING" id="39947.Q84TV4"/>
<dbReference type="PaxDb" id="39947-Q84TV4"/>
<dbReference type="EnsemblPlants" id="Os03t0818300-01">
    <property type="protein sequence ID" value="Os03t0818300-01"/>
    <property type="gene ID" value="Os03g0818300"/>
</dbReference>
<dbReference type="Gramene" id="Os03t0818300-01">
    <property type="protein sequence ID" value="Os03t0818300-01"/>
    <property type="gene ID" value="Os03g0818300"/>
</dbReference>
<dbReference type="KEGG" id="dosa:Os03g0818300"/>
<dbReference type="eggNOG" id="KOG1632">
    <property type="taxonomic scope" value="Eukaryota"/>
</dbReference>
<dbReference type="HOGENOM" id="CLU_058315_1_0_1"/>
<dbReference type="InParanoid" id="Q84TV4"/>
<dbReference type="OMA" id="KFYSLCD"/>
<dbReference type="OrthoDB" id="436852at2759"/>
<dbReference type="Proteomes" id="UP000000763">
    <property type="component" value="Chromosome 3"/>
</dbReference>
<dbReference type="Proteomes" id="UP000007752">
    <property type="component" value="Chromosome 3"/>
</dbReference>
<dbReference type="Proteomes" id="UP000059680">
    <property type="component" value="Chromosome 3"/>
</dbReference>
<dbReference type="GO" id="GO:0005634">
    <property type="term" value="C:nucleus"/>
    <property type="evidence" value="ECO:0000318"/>
    <property type="project" value="GO_Central"/>
</dbReference>
<dbReference type="GO" id="GO:0042393">
    <property type="term" value="F:histone binding"/>
    <property type="evidence" value="ECO:0007669"/>
    <property type="project" value="InterPro"/>
</dbReference>
<dbReference type="GO" id="GO:0000976">
    <property type="term" value="F:transcription cis-regulatory region binding"/>
    <property type="evidence" value="ECO:0000318"/>
    <property type="project" value="GO_Central"/>
</dbReference>
<dbReference type="GO" id="GO:0003712">
    <property type="term" value="F:transcription coregulator activity"/>
    <property type="evidence" value="ECO:0000318"/>
    <property type="project" value="GO_Central"/>
</dbReference>
<dbReference type="GO" id="GO:0008270">
    <property type="term" value="F:zinc ion binding"/>
    <property type="evidence" value="ECO:0007669"/>
    <property type="project" value="UniProtKB-KW"/>
</dbReference>
<dbReference type="GO" id="GO:0006325">
    <property type="term" value="P:chromatin organization"/>
    <property type="evidence" value="ECO:0007669"/>
    <property type="project" value="UniProtKB-KW"/>
</dbReference>
<dbReference type="GO" id="GO:0006355">
    <property type="term" value="P:regulation of DNA-templated transcription"/>
    <property type="evidence" value="ECO:0007669"/>
    <property type="project" value="InterPro"/>
</dbReference>
<dbReference type="CDD" id="cd15613">
    <property type="entry name" value="PHD_AL_plant"/>
    <property type="match status" value="1"/>
</dbReference>
<dbReference type="FunFam" id="3.30.40.10:FF:000306">
    <property type="entry name" value="PHD finger alfin-like protein"/>
    <property type="match status" value="1"/>
</dbReference>
<dbReference type="Gene3D" id="3.30.40.10">
    <property type="entry name" value="Zinc/RING finger domain, C3HC4 (zinc finger)"/>
    <property type="match status" value="1"/>
</dbReference>
<dbReference type="InterPro" id="IPR045104">
    <property type="entry name" value="Alfin"/>
</dbReference>
<dbReference type="InterPro" id="IPR021998">
    <property type="entry name" value="Alfin_N"/>
</dbReference>
<dbReference type="InterPro" id="IPR044104">
    <property type="entry name" value="PHD_AL_plant"/>
</dbReference>
<dbReference type="InterPro" id="IPR019786">
    <property type="entry name" value="Zinc_finger_PHD-type_CS"/>
</dbReference>
<dbReference type="InterPro" id="IPR011011">
    <property type="entry name" value="Znf_FYVE_PHD"/>
</dbReference>
<dbReference type="InterPro" id="IPR001965">
    <property type="entry name" value="Znf_PHD"/>
</dbReference>
<dbReference type="InterPro" id="IPR019787">
    <property type="entry name" value="Znf_PHD-finger"/>
</dbReference>
<dbReference type="InterPro" id="IPR013083">
    <property type="entry name" value="Znf_RING/FYVE/PHD"/>
</dbReference>
<dbReference type="PANTHER" id="PTHR12321">
    <property type="entry name" value="CPG BINDING PROTEIN"/>
    <property type="match status" value="1"/>
</dbReference>
<dbReference type="PANTHER" id="PTHR12321:SF116">
    <property type="entry name" value="PHD FINGER PROTEIN ALFIN-LIKE 3"/>
    <property type="match status" value="1"/>
</dbReference>
<dbReference type="Pfam" id="PF12165">
    <property type="entry name" value="Alfin"/>
    <property type="match status" value="1"/>
</dbReference>
<dbReference type="Pfam" id="PF00628">
    <property type="entry name" value="PHD"/>
    <property type="match status" value="1"/>
</dbReference>
<dbReference type="SMART" id="SM00249">
    <property type="entry name" value="PHD"/>
    <property type="match status" value="1"/>
</dbReference>
<dbReference type="SUPFAM" id="SSF57903">
    <property type="entry name" value="FYVE/PHD zinc finger"/>
    <property type="match status" value="1"/>
</dbReference>
<dbReference type="PROSITE" id="PS01359">
    <property type="entry name" value="ZF_PHD_1"/>
    <property type="match status" value="1"/>
</dbReference>
<dbReference type="PROSITE" id="PS50016">
    <property type="entry name" value="ZF_PHD_2"/>
    <property type="match status" value="1"/>
</dbReference>
<sequence length="247" mass="27782">MEMAPAAQVASNPRTVEDIFKDYSARRGALVRALTSDVDEFFGLCDPDKENLCLYGLANGSWEVALPAEEVPPELPEPALGINFARDGMNRRDWLSLVAVHSDSWLVSVAFFFAARLNGNERKRLFNMINDLPTVYEALVDRKHVRDRSGVDSSGKSKHSTKRTGEGQVKRSRVVAEEYEDDDEEHNETFCGTCGGLYNANEFWIGCDICERWFHGKCVRITPAKAEHIKHYKCPDCSSSSSKKTRL</sequence>
<accession>Q84TV4</accession>
<accession>A0A0P0W4R7</accession>
<accession>Q84TC0</accession>
<name>ALFL3_ORYSJ</name>
<organism>
    <name type="scientific">Oryza sativa subsp. japonica</name>
    <name type="common">Rice</name>
    <dbReference type="NCBI Taxonomy" id="39947"/>
    <lineage>
        <taxon>Eukaryota</taxon>
        <taxon>Viridiplantae</taxon>
        <taxon>Streptophyta</taxon>
        <taxon>Embryophyta</taxon>
        <taxon>Tracheophyta</taxon>
        <taxon>Spermatophyta</taxon>
        <taxon>Magnoliopsida</taxon>
        <taxon>Liliopsida</taxon>
        <taxon>Poales</taxon>
        <taxon>Poaceae</taxon>
        <taxon>BOP clade</taxon>
        <taxon>Oryzoideae</taxon>
        <taxon>Oryzeae</taxon>
        <taxon>Oryzinae</taxon>
        <taxon>Oryza</taxon>
        <taxon>Oryza sativa</taxon>
    </lineage>
</organism>
<gene>
    <name type="ordered locus">Os03g0818300</name>
    <name type="ordered locus">LOC_Os03g60390</name>
    <name type="ORF">OJ1754_E06.2</name>
    <name type="ORF">OsJ_13123</name>
    <name type="ORF">OSJNBa0094J08.5</name>
</gene>
<evidence type="ECO:0000250" key="1"/>
<evidence type="ECO:0000255" key="2">
    <source>
        <dbReference type="PROSITE-ProRule" id="PRU00146"/>
    </source>
</evidence>
<evidence type="ECO:0000256" key="3">
    <source>
        <dbReference type="SAM" id="MobiDB-lite"/>
    </source>
</evidence>
<evidence type="ECO:0000305" key="4"/>
<proteinExistence type="evidence at transcript level"/>
<protein>
    <recommendedName>
        <fullName>PHD finger protein ALFIN-LIKE 3</fullName>
    </recommendedName>
</protein>
<keyword id="KW-0156">Chromatin regulator</keyword>
<keyword id="KW-0479">Metal-binding</keyword>
<keyword id="KW-0539">Nucleus</keyword>
<keyword id="KW-1185">Reference proteome</keyword>
<keyword id="KW-0804">Transcription</keyword>
<keyword id="KW-0805">Transcription regulation</keyword>
<keyword id="KW-0862">Zinc</keyword>
<keyword id="KW-0863">Zinc-finger</keyword>
<feature type="chain" id="PRO_0000412941" description="PHD finger protein ALFIN-LIKE 3">
    <location>
        <begin position="1"/>
        <end position="247"/>
    </location>
</feature>
<feature type="zinc finger region" description="PHD-type" evidence="2">
    <location>
        <begin position="188"/>
        <end position="240"/>
    </location>
</feature>
<feature type="region of interest" description="Disordered" evidence="3">
    <location>
        <begin position="147"/>
        <end position="178"/>
    </location>
</feature>
<feature type="site" description="Histone H3K4me3 binding" evidence="1">
    <location>
        <position position="198"/>
    </location>
</feature>
<feature type="site" description="Histone H3K4me3 binding" evidence="1">
    <location>
        <position position="204"/>
    </location>
</feature>
<feature type="site" description="Histone H3K4me3 binding" evidence="1">
    <location>
        <position position="208"/>
    </location>
</feature>
<feature type="site" description="Histone H3K4me3 binding" evidence="1">
    <location>
        <position position="213"/>
    </location>
</feature>